<comment type="function">
    <text evidence="1">Endoribonuclease that initiates mRNA decay.</text>
</comment>
<comment type="subcellular location">
    <subcellularLocation>
        <location evidence="1">Cell membrane</location>
        <topology evidence="1">Single-pass membrane protein</topology>
    </subcellularLocation>
</comment>
<comment type="similarity">
    <text evidence="1">Belongs to the RNase Y family.</text>
</comment>
<keyword id="KW-1003">Cell membrane</keyword>
<keyword id="KW-0255">Endonuclease</keyword>
<keyword id="KW-0378">Hydrolase</keyword>
<keyword id="KW-0472">Membrane</keyword>
<keyword id="KW-0540">Nuclease</keyword>
<keyword id="KW-0694">RNA-binding</keyword>
<keyword id="KW-0812">Transmembrane</keyword>
<keyword id="KW-1133">Transmembrane helix</keyword>
<protein>
    <recommendedName>
        <fullName evidence="1">Ribonuclease Y</fullName>
        <shortName evidence="1">RNase Y</shortName>
        <ecNumber evidence="1">3.1.-.-</ecNumber>
    </recommendedName>
</protein>
<proteinExistence type="inferred from homology"/>
<name>RNY_STRPF</name>
<reference key="1">
    <citation type="journal article" date="2006" name="Proc. Natl. Acad. Sci. U.S.A.">
        <title>Molecular genetic anatomy of inter- and intraserotype variation in the human bacterial pathogen group A Streptococcus.</title>
        <authorList>
            <person name="Beres S.B."/>
            <person name="Richter E.W."/>
            <person name="Nagiec M.J."/>
            <person name="Sumby P."/>
            <person name="Porcella S.F."/>
            <person name="DeLeo F.R."/>
            <person name="Musser J.M."/>
        </authorList>
    </citation>
    <scope>NUCLEOTIDE SEQUENCE [LARGE SCALE GENOMIC DNA]</scope>
    <source>
        <strain>MGAS10750</strain>
    </source>
</reference>
<gene>
    <name evidence="1" type="primary">rny</name>
    <name type="ordered locus">MGAS10750_Spy1451</name>
</gene>
<feature type="chain" id="PRO_0000344947" description="Ribonuclease Y">
    <location>
        <begin position="1"/>
        <end position="535"/>
    </location>
</feature>
<feature type="transmembrane region" description="Helical" evidence="1">
    <location>
        <begin position="4"/>
        <end position="24"/>
    </location>
</feature>
<feature type="domain" description="KH" evidence="1">
    <location>
        <begin position="225"/>
        <end position="285"/>
    </location>
</feature>
<feature type="domain" description="HD" evidence="2">
    <location>
        <begin position="351"/>
        <end position="444"/>
    </location>
</feature>
<feature type="region of interest" description="Disordered" evidence="3">
    <location>
        <begin position="118"/>
        <end position="141"/>
    </location>
</feature>
<organism>
    <name type="scientific">Streptococcus pyogenes serotype M4 (strain MGAS10750)</name>
    <dbReference type="NCBI Taxonomy" id="370554"/>
    <lineage>
        <taxon>Bacteria</taxon>
        <taxon>Bacillati</taxon>
        <taxon>Bacillota</taxon>
        <taxon>Bacilli</taxon>
        <taxon>Lactobacillales</taxon>
        <taxon>Streptococcaceae</taxon>
        <taxon>Streptococcus</taxon>
    </lineage>
</organism>
<accession>Q1J5I5</accession>
<dbReference type="EC" id="3.1.-.-" evidence="1"/>
<dbReference type="EMBL" id="CP000262">
    <property type="protein sequence ID" value="ABF38401.1"/>
    <property type="molecule type" value="Genomic_DNA"/>
</dbReference>
<dbReference type="SMR" id="Q1J5I5"/>
<dbReference type="KEGG" id="spi:MGAS10750_Spy1451"/>
<dbReference type="HOGENOM" id="CLU_028328_1_0_9"/>
<dbReference type="Proteomes" id="UP000002434">
    <property type="component" value="Chromosome"/>
</dbReference>
<dbReference type="GO" id="GO:0005886">
    <property type="term" value="C:plasma membrane"/>
    <property type="evidence" value="ECO:0007669"/>
    <property type="project" value="UniProtKB-SubCell"/>
</dbReference>
<dbReference type="GO" id="GO:0003723">
    <property type="term" value="F:RNA binding"/>
    <property type="evidence" value="ECO:0007669"/>
    <property type="project" value="UniProtKB-UniRule"/>
</dbReference>
<dbReference type="GO" id="GO:0004521">
    <property type="term" value="F:RNA endonuclease activity"/>
    <property type="evidence" value="ECO:0007669"/>
    <property type="project" value="UniProtKB-UniRule"/>
</dbReference>
<dbReference type="GO" id="GO:0006402">
    <property type="term" value="P:mRNA catabolic process"/>
    <property type="evidence" value="ECO:0007669"/>
    <property type="project" value="UniProtKB-UniRule"/>
</dbReference>
<dbReference type="CDD" id="cd00077">
    <property type="entry name" value="HDc"/>
    <property type="match status" value="1"/>
</dbReference>
<dbReference type="CDD" id="cd22431">
    <property type="entry name" value="KH-I_RNaseY"/>
    <property type="match status" value="1"/>
</dbReference>
<dbReference type="FunFam" id="1.10.3210.10:FF:000003">
    <property type="entry name" value="Ribonuclease Y"/>
    <property type="match status" value="1"/>
</dbReference>
<dbReference type="Gene3D" id="1.10.3210.10">
    <property type="entry name" value="Hypothetical protein af1432"/>
    <property type="match status" value="1"/>
</dbReference>
<dbReference type="Gene3D" id="3.30.1370.10">
    <property type="entry name" value="K Homology domain, type 1"/>
    <property type="match status" value="1"/>
</dbReference>
<dbReference type="HAMAP" id="MF_00335">
    <property type="entry name" value="RNase_Y"/>
    <property type="match status" value="1"/>
</dbReference>
<dbReference type="InterPro" id="IPR003607">
    <property type="entry name" value="HD/PDEase_dom"/>
</dbReference>
<dbReference type="InterPro" id="IPR006674">
    <property type="entry name" value="HD_domain"/>
</dbReference>
<dbReference type="InterPro" id="IPR006675">
    <property type="entry name" value="HDIG_dom"/>
</dbReference>
<dbReference type="InterPro" id="IPR004087">
    <property type="entry name" value="KH_dom"/>
</dbReference>
<dbReference type="InterPro" id="IPR004088">
    <property type="entry name" value="KH_dom_type_1"/>
</dbReference>
<dbReference type="InterPro" id="IPR036612">
    <property type="entry name" value="KH_dom_type_1_sf"/>
</dbReference>
<dbReference type="InterPro" id="IPR017705">
    <property type="entry name" value="Ribonuclease_Y"/>
</dbReference>
<dbReference type="InterPro" id="IPR022711">
    <property type="entry name" value="RNase_Y_N"/>
</dbReference>
<dbReference type="NCBIfam" id="TIGR00277">
    <property type="entry name" value="HDIG"/>
    <property type="match status" value="1"/>
</dbReference>
<dbReference type="NCBIfam" id="NF000997">
    <property type="entry name" value="PRK00106.1"/>
    <property type="match status" value="1"/>
</dbReference>
<dbReference type="NCBIfam" id="TIGR03319">
    <property type="entry name" value="RNase_Y"/>
    <property type="match status" value="1"/>
</dbReference>
<dbReference type="PANTHER" id="PTHR12826">
    <property type="entry name" value="RIBONUCLEASE Y"/>
    <property type="match status" value="1"/>
</dbReference>
<dbReference type="PANTHER" id="PTHR12826:SF15">
    <property type="entry name" value="RIBONUCLEASE Y"/>
    <property type="match status" value="1"/>
</dbReference>
<dbReference type="Pfam" id="PF01966">
    <property type="entry name" value="HD"/>
    <property type="match status" value="1"/>
</dbReference>
<dbReference type="Pfam" id="PF00013">
    <property type="entry name" value="KH_1"/>
    <property type="match status" value="1"/>
</dbReference>
<dbReference type="Pfam" id="PF12072">
    <property type="entry name" value="RNase_Y_N"/>
    <property type="match status" value="1"/>
</dbReference>
<dbReference type="SMART" id="SM00471">
    <property type="entry name" value="HDc"/>
    <property type="match status" value="1"/>
</dbReference>
<dbReference type="SMART" id="SM00322">
    <property type="entry name" value="KH"/>
    <property type="match status" value="1"/>
</dbReference>
<dbReference type="SUPFAM" id="SSF54791">
    <property type="entry name" value="Eukaryotic type KH-domain (KH-domain type I)"/>
    <property type="match status" value="1"/>
</dbReference>
<dbReference type="SUPFAM" id="SSF109604">
    <property type="entry name" value="HD-domain/PDEase-like"/>
    <property type="match status" value="1"/>
</dbReference>
<dbReference type="PROSITE" id="PS51831">
    <property type="entry name" value="HD"/>
    <property type="match status" value="1"/>
</dbReference>
<dbReference type="PROSITE" id="PS50084">
    <property type="entry name" value="KH_TYPE_1"/>
    <property type="match status" value="1"/>
</dbReference>
<evidence type="ECO:0000255" key="1">
    <source>
        <dbReference type="HAMAP-Rule" id="MF_00335"/>
    </source>
</evidence>
<evidence type="ECO:0000255" key="2">
    <source>
        <dbReference type="PROSITE-ProRule" id="PRU01175"/>
    </source>
</evidence>
<evidence type="ECO:0000256" key="3">
    <source>
        <dbReference type="SAM" id="MobiDB-lite"/>
    </source>
</evidence>
<sequence>MVNIILLIVSALIGLILGYALISIRLKSAKEAAELTLLNAEQEAVDIRGKAEVDAEHIKKTAKRESKANRKELLLEAKEEARKYREEIEQEFKSERQELKQLETRLAERSLTLDRKDENLSSKEKVLDSKEQSLTDKSKHIDERQLQVEKLEEEKKAELEKVAAMTIAEAREVILMETENKLTHEIATRIRDAERDIKDRTVKTAKDLLAQAMQRLAGEYVTEQTITSVHLPDDNMKGRIIGREGRNIRTLESLTGIDVIIDDTPEVVILSGFDPIRREIARMTLESLIADGRIHPARIEELVEKNRLEMDNRIREYGEAAAYEIGAPNLHPDLIKIMGRLQFRTSFGQNVLRHSVEVGKLAGILAGELGENVALARRAGFLHDMGKAIDREVEGSHVEIGMEFARKYKEHPVVVNTIASHHGDVEPDSVIAVLVAAADALSSARPGARNESMENYIKRLRDLEEIATSFDGVQNSFALQAGREIRIMVQPEKISDDQVVILSHKVREKIENNLDYPGNIKVTVIREMRAVDYAK</sequence>